<comment type="function">
    <text evidence="1">Catalyzes the condensation of iminoaspartate with dihydroxyacetone phosphate to form quinolinate.</text>
</comment>
<comment type="catalytic activity">
    <reaction evidence="1">
        <text>iminosuccinate + dihydroxyacetone phosphate = quinolinate + phosphate + 2 H2O + H(+)</text>
        <dbReference type="Rhea" id="RHEA:25888"/>
        <dbReference type="ChEBI" id="CHEBI:15377"/>
        <dbReference type="ChEBI" id="CHEBI:15378"/>
        <dbReference type="ChEBI" id="CHEBI:29959"/>
        <dbReference type="ChEBI" id="CHEBI:43474"/>
        <dbReference type="ChEBI" id="CHEBI:57642"/>
        <dbReference type="ChEBI" id="CHEBI:77875"/>
        <dbReference type="EC" id="2.5.1.72"/>
    </reaction>
    <physiologicalReaction direction="left-to-right" evidence="1">
        <dbReference type="Rhea" id="RHEA:25889"/>
    </physiologicalReaction>
</comment>
<comment type="cofactor">
    <cofactor evidence="1">
        <name>[4Fe-4S] cluster</name>
        <dbReference type="ChEBI" id="CHEBI:49883"/>
    </cofactor>
    <text evidence="1">Binds 1 [4Fe-4S] cluster per subunit.</text>
</comment>
<comment type="pathway">
    <text evidence="1">Cofactor biosynthesis; NAD(+) biosynthesis; quinolinate from iminoaspartate: step 1/1.</text>
</comment>
<comment type="subcellular location">
    <subcellularLocation>
        <location evidence="1">Cytoplasm</location>
    </subcellularLocation>
</comment>
<comment type="similarity">
    <text evidence="1">Belongs to the quinolinate synthase family. Type 1 subfamily.</text>
</comment>
<gene>
    <name evidence="1" type="primary">nadA</name>
    <name type="ordered locus">PA14_51330</name>
</gene>
<name>NADA_PSEAB</name>
<feature type="chain" id="PRO_1000024961" description="Quinolinate synthase">
    <location>
        <begin position="1"/>
        <end position="352"/>
    </location>
</feature>
<feature type="binding site" evidence="1">
    <location>
        <position position="48"/>
    </location>
    <ligand>
        <name>iminosuccinate</name>
        <dbReference type="ChEBI" id="CHEBI:77875"/>
    </ligand>
</feature>
<feature type="binding site" evidence="1">
    <location>
        <position position="69"/>
    </location>
    <ligand>
        <name>iminosuccinate</name>
        <dbReference type="ChEBI" id="CHEBI:77875"/>
    </ligand>
</feature>
<feature type="binding site" evidence="1">
    <location>
        <position position="114"/>
    </location>
    <ligand>
        <name>[4Fe-4S] cluster</name>
        <dbReference type="ChEBI" id="CHEBI:49883"/>
    </ligand>
</feature>
<feature type="binding site" evidence="1">
    <location>
        <begin position="140"/>
        <end position="142"/>
    </location>
    <ligand>
        <name>iminosuccinate</name>
        <dbReference type="ChEBI" id="CHEBI:77875"/>
    </ligand>
</feature>
<feature type="binding site" evidence="1">
    <location>
        <position position="157"/>
    </location>
    <ligand>
        <name>iminosuccinate</name>
        <dbReference type="ChEBI" id="CHEBI:77875"/>
    </ligand>
</feature>
<feature type="binding site" evidence="1">
    <location>
        <position position="201"/>
    </location>
    <ligand>
        <name>[4Fe-4S] cluster</name>
        <dbReference type="ChEBI" id="CHEBI:49883"/>
    </ligand>
</feature>
<feature type="binding site" evidence="1">
    <location>
        <begin position="227"/>
        <end position="229"/>
    </location>
    <ligand>
        <name>iminosuccinate</name>
        <dbReference type="ChEBI" id="CHEBI:77875"/>
    </ligand>
</feature>
<feature type="binding site" evidence="1">
    <location>
        <position position="244"/>
    </location>
    <ligand>
        <name>iminosuccinate</name>
        <dbReference type="ChEBI" id="CHEBI:77875"/>
    </ligand>
</feature>
<feature type="binding site" evidence="1">
    <location>
        <position position="298"/>
    </location>
    <ligand>
        <name>[4Fe-4S] cluster</name>
        <dbReference type="ChEBI" id="CHEBI:49883"/>
    </ligand>
</feature>
<reference key="1">
    <citation type="journal article" date="2006" name="Genome Biol.">
        <title>Genomic analysis reveals that Pseudomonas aeruginosa virulence is combinatorial.</title>
        <authorList>
            <person name="Lee D.G."/>
            <person name="Urbach J.M."/>
            <person name="Wu G."/>
            <person name="Liberati N.T."/>
            <person name="Feinbaum R.L."/>
            <person name="Miyata S."/>
            <person name="Diggins L.T."/>
            <person name="He J."/>
            <person name="Saucier M."/>
            <person name="Deziel E."/>
            <person name="Friedman L."/>
            <person name="Li L."/>
            <person name="Grills G."/>
            <person name="Montgomery K."/>
            <person name="Kucherlapati R."/>
            <person name="Rahme L.G."/>
            <person name="Ausubel F.M."/>
        </authorList>
    </citation>
    <scope>NUCLEOTIDE SEQUENCE [LARGE SCALE GENOMIC DNA]</scope>
    <source>
        <strain>UCBPP-PA14</strain>
    </source>
</reference>
<protein>
    <recommendedName>
        <fullName evidence="1">Quinolinate synthase</fullName>
        <ecNumber evidence="1">2.5.1.72</ecNumber>
    </recommendedName>
</protein>
<accession>Q02IG9</accession>
<keyword id="KW-0004">4Fe-4S</keyword>
<keyword id="KW-0963">Cytoplasm</keyword>
<keyword id="KW-0408">Iron</keyword>
<keyword id="KW-0411">Iron-sulfur</keyword>
<keyword id="KW-0479">Metal-binding</keyword>
<keyword id="KW-0662">Pyridine nucleotide biosynthesis</keyword>
<keyword id="KW-0808">Transferase</keyword>
<organism>
    <name type="scientific">Pseudomonas aeruginosa (strain UCBPP-PA14)</name>
    <dbReference type="NCBI Taxonomy" id="208963"/>
    <lineage>
        <taxon>Bacteria</taxon>
        <taxon>Pseudomonadati</taxon>
        <taxon>Pseudomonadota</taxon>
        <taxon>Gammaproteobacteria</taxon>
        <taxon>Pseudomonadales</taxon>
        <taxon>Pseudomonadaceae</taxon>
        <taxon>Pseudomonas</taxon>
    </lineage>
</organism>
<proteinExistence type="inferred from homology"/>
<sequence length="352" mass="38418">MTHISERLLVQAHLAAKQPRVLSEQESAEHRAAIAAELKAQNAVLVAHYYCDPVIQALAEETGGCVSDSLEMARFGNQHPAQTVVVAGVRFMGETAKILNPEKRVLMPTLEATCSLDLGCPVDEFSAFCDQHPERTVVVYANTSAAVKARADWVVTSSCAVEIVEHLMDNGEPILWAPDQHLGRYIQRETGADMLLWDGACIVHEEFKAKQLEDMKALYPDAAILVHPESPESVVALADAVGSTSQLIKAAQTLPNKTFIVATDRGIFYKMQQLCPDKDFIEAPTAGNGAACRSCAHCPWMAMNTLERTLACLREGSGEIFVDPALIPRAVRPLKRMLDFTQAARLRQAGNA</sequence>
<evidence type="ECO:0000255" key="1">
    <source>
        <dbReference type="HAMAP-Rule" id="MF_00567"/>
    </source>
</evidence>
<dbReference type="EC" id="2.5.1.72" evidence="1"/>
<dbReference type="EMBL" id="CP000438">
    <property type="protein sequence ID" value="ABJ10168.1"/>
    <property type="molecule type" value="Genomic_DNA"/>
</dbReference>
<dbReference type="RefSeq" id="WP_003112547.1">
    <property type="nucleotide sequence ID" value="NZ_CP034244.1"/>
</dbReference>
<dbReference type="SMR" id="Q02IG9"/>
<dbReference type="KEGG" id="pau:PA14_51330"/>
<dbReference type="PseudoCAP" id="PA14_51330"/>
<dbReference type="HOGENOM" id="CLU_047382_1_0_6"/>
<dbReference type="BioCyc" id="PAER208963:G1G74-4316-MONOMER"/>
<dbReference type="UniPathway" id="UPA00253">
    <property type="reaction ID" value="UER00327"/>
</dbReference>
<dbReference type="Proteomes" id="UP000000653">
    <property type="component" value="Chromosome"/>
</dbReference>
<dbReference type="GO" id="GO:0005829">
    <property type="term" value="C:cytosol"/>
    <property type="evidence" value="ECO:0007669"/>
    <property type="project" value="TreeGrafter"/>
</dbReference>
<dbReference type="GO" id="GO:0051539">
    <property type="term" value="F:4 iron, 4 sulfur cluster binding"/>
    <property type="evidence" value="ECO:0007669"/>
    <property type="project" value="UniProtKB-KW"/>
</dbReference>
<dbReference type="GO" id="GO:0046872">
    <property type="term" value="F:metal ion binding"/>
    <property type="evidence" value="ECO:0007669"/>
    <property type="project" value="UniProtKB-KW"/>
</dbReference>
<dbReference type="GO" id="GO:0008987">
    <property type="term" value="F:quinolinate synthetase A activity"/>
    <property type="evidence" value="ECO:0007669"/>
    <property type="project" value="UniProtKB-UniRule"/>
</dbReference>
<dbReference type="GO" id="GO:0034628">
    <property type="term" value="P:'de novo' NAD biosynthetic process from L-aspartate"/>
    <property type="evidence" value="ECO:0007669"/>
    <property type="project" value="TreeGrafter"/>
</dbReference>
<dbReference type="FunFam" id="3.40.50.10800:FF:000001">
    <property type="entry name" value="Quinolinate synthase A"/>
    <property type="match status" value="1"/>
</dbReference>
<dbReference type="Gene3D" id="3.40.50.10800">
    <property type="entry name" value="NadA-like"/>
    <property type="match status" value="3"/>
</dbReference>
<dbReference type="HAMAP" id="MF_00567">
    <property type="entry name" value="NadA_type1"/>
    <property type="match status" value="1"/>
</dbReference>
<dbReference type="InterPro" id="IPR003473">
    <property type="entry name" value="NadA"/>
</dbReference>
<dbReference type="InterPro" id="IPR036094">
    <property type="entry name" value="NadA_sf"/>
</dbReference>
<dbReference type="InterPro" id="IPR023513">
    <property type="entry name" value="Quinolinate_synth_A_type1"/>
</dbReference>
<dbReference type="NCBIfam" id="TIGR00550">
    <property type="entry name" value="nadA"/>
    <property type="match status" value="1"/>
</dbReference>
<dbReference type="NCBIfam" id="NF006877">
    <property type="entry name" value="PRK09375.1-1"/>
    <property type="match status" value="1"/>
</dbReference>
<dbReference type="NCBIfam" id="NF006878">
    <property type="entry name" value="PRK09375.1-2"/>
    <property type="match status" value="1"/>
</dbReference>
<dbReference type="PANTHER" id="PTHR30573:SF0">
    <property type="entry name" value="QUINOLINATE SYNTHASE, CHLOROPLASTIC"/>
    <property type="match status" value="1"/>
</dbReference>
<dbReference type="PANTHER" id="PTHR30573">
    <property type="entry name" value="QUINOLINATE SYNTHETASE A"/>
    <property type="match status" value="1"/>
</dbReference>
<dbReference type="Pfam" id="PF02445">
    <property type="entry name" value="NadA"/>
    <property type="match status" value="1"/>
</dbReference>
<dbReference type="SUPFAM" id="SSF142754">
    <property type="entry name" value="NadA-like"/>
    <property type="match status" value="1"/>
</dbReference>